<reference key="1">
    <citation type="journal article" date="2007" name="Mol. Genet. Genomics">
        <title>Chloroplast genomes of the diatoms Phaeodactylum tricornutum and Thalassiosira pseudonana: comparison with other plastid genomes of the red lineage.</title>
        <authorList>
            <person name="Oudot-Le Secq M.-P."/>
            <person name="Grimwood J."/>
            <person name="Shapiro H."/>
            <person name="Armbrust E.V."/>
            <person name="Bowler C."/>
            <person name="Green B.R."/>
        </authorList>
    </citation>
    <scope>NUCLEOTIDE SEQUENCE [LARGE SCALE GENOMIC DNA]</scope>
    <source>
        <strain>CCMP1335 / NEPCC58 / CCAP 1085/12</strain>
    </source>
</reference>
<protein>
    <recommendedName>
        <fullName evidence="1">Photosystem I reaction center subunit IX</fullName>
    </recommendedName>
    <alternativeName>
        <fullName evidence="1">PSI-J</fullName>
    </alternativeName>
</protein>
<proteinExistence type="evidence at protein level"/>
<name>PSAJ_THAPS</name>
<sequence>MNDFQKYLSTAPVLLTLWMTFTAGFIIEVNRFFPDMLGLYF</sequence>
<dbReference type="EMBL" id="EF067921">
    <property type="protein sequence ID" value="ABK20786.1"/>
    <property type="molecule type" value="Genomic_DNA"/>
</dbReference>
<dbReference type="RefSeq" id="YP_874563.1">
    <property type="nucleotide sequence ID" value="NC_008589.1"/>
</dbReference>
<dbReference type="PDB" id="8XLS">
    <property type="method" value="EM"/>
    <property type="resolution" value="2.30 A"/>
    <property type="chains" value="J=1-41"/>
</dbReference>
<dbReference type="PDB" id="8ZEH">
    <property type="method" value="EM"/>
    <property type="resolution" value="2.78 A"/>
    <property type="chains" value="j=1-40"/>
</dbReference>
<dbReference type="PDB" id="8ZET">
    <property type="method" value="EM"/>
    <property type="resolution" value="3.20 A"/>
    <property type="chains" value="j=1-40"/>
</dbReference>
<dbReference type="PDBsum" id="8XLS"/>
<dbReference type="PDBsum" id="8ZEH"/>
<dbReference type="PDBsum" id="8ZET"/>
<dbReference type="EMDB" id="EMD-38457"/>
<dbReference type="EMDB" id="EMD-60032"/>
<dbReference type="EMDB" id="EMD-60044"/>
<dbReference type="SMR" id="A0T0V1"/>
<dbReference type="STRING" id="35128.A0T0V1"/>
<dbReference type="GeneID" id="4524873"/>
<dbReference type="InParanoid" id="A0T0V1"/>
<dbReference type="GO" id="GO:0009535">
    <property type="term" value="C:chloroplast thylakoid membrane"/>
    <property type="evidence" value="ECO:0007669"/>
    <property type="project" value="UniProtKB-SubCell"/>
</dbReference>
<dbReference type="GO" id="GO:0009522">
    <property type="term" value="C:photosystem I"/>
    <property type="evidence" value="ECO:0007669"/>
    <property type="project" value="UniProtKB-KW"/>
</dbReference>
<dbReference type="GO" id="GO:0015979">
    <property type="term" value="P:photosynthesis"/>
    <property type="evidence" value="ECO:0007669"/>
    <property type="project" value="UniProtKB-UniRule"/>
</dbReference>
<dbReference type="Gene3D" id="1.20.5.510">
    <property type="entry name" value="Single helix bin"/>
    <property type="match status" value="1"/>
</dbReference>
<dbReference type="HAMAP" id="MF_00522">
    <property type="entry name" value="PSI_PsaJ"/>
    <property type="match status" value="1"/>
</dbReference>
<dbReference type="InterPro" id="IPR002615">
    <property type="entry name" value="PSI_PsaJ"/>
</dbReference>
<dbReference type="InterPro" id="IPR036062">
    <property type="entry name" value="PSI_PsaJ_sf"/>
</dbReference>
<dbReference type="PANTHER" id="PTHR36082">
    <property type="match status" value="1"/>
</dbReference>
<dbReference type="PANTHER" id="PTHR36082:SF2">
    <property type="entry name" value="PHOTOSYSTEM I REACTION CENTER SUBUNIT IX"/>
    <property type="match status" value="1"/>
</dbReference>
<dbReference type="Pfam" id="PF01701">
    <property type="entry name" value="PSI_PsaJ"/>
    <property type="match status" value="1"/>
</dbReference>
<dbReference type="SUPFAM" id="SSF81544">
    <property type="entry name" value="Subunit IX of photosystem I reaction centre, PsaJ"/>
    <property type="match status" value="1"/>
</dbReference>
<evidence type="ECO:0000255" key="1">
    <source>
        <dbReference type="HAMAP-Rule" id="MF_00522"/>
    </source>
</evidence>
<evidence type="ECO:0007829" key="2">
    <source>
        <dbReference type="PDB" id="8XLS"/>
    </source>
</evidence>
<organism>
    <name type="scientific">Thalassiosira pseudonana</name>
    <name type="common">Marine diatom</name>
    <name type="synonym">Cyclotella nana</name>
    <dbReference type="NCBI Taxonomy" id="35128"/>
    <lineage>
        <taxon>Eukaryota</taxon>
        <taxon>Sar</taxon>
        <taxon>Stramenopiles</taxon>
        <taxon>Ochrophyta</taxon>
        <taxon>Bacillariophyta</taxon>
        <taxon>Coscinodiscophyceae</taxon>
        <taxon>Thalassiosirophycidae</taxon>
        <taxon>Thalassiosirales</taxon>
        <taxon>Thalassiosiraceae</taxon>
        <taxon>Thalassiosira</taxon>
    </lineage>
</organism>
<feature type="chain" id="PRO_0000276085" description="Photosystem I reaction center subunit IX">
    <location>
        <begin position="1"/>
        <end position="41"/>
    </location>
</feature>
<feature type="transmembrane region" description="Helical" evidence="1">
    <location>
        <begin position="7"/>
        <end position="27"/>
    </location>
</feature>
<feature type="helix" evidence="2">
    <location>
        <begin position="2"/>
        <end position="8"/>
    </location>
</feature>
<feature type="helix" evidence="2">
    <location>
        <begin position="11"/>
        <end position="32"/>
    </location>
</feature>
<feature type="strand" evidence="2">
    <location>
        <begin position="37"/>
        <end position="39"/>
    </location>
</feature>
<gene>
    <name evidence="1" type="primary">psaJ</name>
</gene>
<keyword id="KW-0002">3D-structure</keyword>
<keyword id="KW-0150">Chloroplast</keyword>
<keyword id="KW-0472">Membrane</keyword>
<keyword id="KW-0602">Photosynthesis</keyword>
<keyword id="KW-0603">Photosystem I</keyword>
<keyword id="KW-0934">Plastid</keyword>
<keyword id="KW-0793">Thylakoid</keyword>
<keyword id="KW-0812">Transmembrane</keyword>
<keyword id="KW-1133">Transmembrane helix</keyword>
<comment type="function">
    <text evidence="1">May help in the organization of the PsaE and PsaF subunits.</text>
</comment>
<comment type="subcellular location">
    <subcellularLocation>
        <location evidence="1">Plastid</location>
        <location evidence="1">Chloroplast thylakoid membrane</location>
        <topology evidence="1">Single-pass membrane protein</topology>
    </subcellularLocation>
</comment>
<comment type="similarity">
    <text evidence="1">Belongs to the PsaJ family.</text>
</comment>
<geneLocation type="chloroplast"/>
<accession>A0T0V1</accession>